<feature type="chain" id="PRO_0000309140" description="Serine/threonine transporter SstT">
    <location>
        <begin position="1"/>
        <end position="404"/>
    </location>
</feature>
<feature type="transmembrane region" description="Helical" evidence="1">
    <location>
        <begin position="17"/>
        <end position="37"/>
    </location>
</feature>
<feature type="transmembrane region" description="Helical" evidence="1">
    <location>
        <begin position="39"/>
        <end position="59"/>
    </location>
</feature>
<feature type="transmembrane region" description="Helical" evidence="1">
    <location>
        <begin position="75"/>
        <end position="95"/>
    </location>
</feature>
<feature type="transmembrane region" description="Helical" evidence="1">
    <location>
        <begin position="138"/>
        <end position="158"/>
    </location>
</feature>
<feature type="transmembrane region" description="Helical" evidence="1">
    <location>
        <begin position="179"/>
        <end position="199"/>
    </location>
</feature>
<feature type="transmembrane region" description="Helical" evidence="1">
    <location>
        <begin position="212"/>
        <end position="232"/>
    </location>
</feature>
<feature type="transmembrane region" description="Helical" evidence="1">
    <location>
        <begin position="287"/>
        <end position="307"/>
    </location>
</feature>
<feature type="transmembrane region" description="Helical" evidence="1">
    <location>
        <begin position="313"/>
        <end position="333"/>
    </location>
</feature>
<comment type="function">
    <text evidence="1">Involved in the import of serine and threonine into the cell, with the concomitant import of sodium (symport system).</text>
</comment>
<comment type="catalytic activity">
    <reaction evidence="1">
        <text>L-serine(in) + Na(+)(in) = L-serine(out) + Na(+)(out)</text>
        <dbReference type="Rhea" id="RHEA:29575"/>
        <dbReference type="ChEBI" id="CHEBI:29101"/>
        <dbReference type="ChEBI" id="CHEBI:33384"/>
    </reaction>
    <physiologicalReaction direction="right-to-left" evidence="1">
        <dbReference type="Rhea" id="RHEA:29577"/>
    </physiologicalReaction>
</comment>
<comment type="catalytic activity">
    <reaction evidence="1">
        <text>L-threonine(in) + Na(+)(in) = L-threonine(out) + Na(+)(out)</text>
        <dbReference type="Rhea" id="RHEA:69999"/>
        <dbReference type="ChEBI" id="CHEBI:29101"/>
        <dbReference type="ChEBI" id="CHEBI:57926"/>
    </reaction>
    <physiologicalReaction direction="right-to-left" evidence="1">
        <dbReference type="Rhea" id="RHEA:70001"/>
    </physiologicalReaction>
</comment>
<comment type="subcellular location">
    <subcellularLocation>
        <location evidence="1">Cell membrane</location>
        <topology evidence="1">Multi-pass membrane protein</topology>
    </subcellularLocation>
</comment>
<comment type="similarity">
    <text evidence="1">Belongs to the dicarboxylate/amino acid:cation symporter (DAACS) (TC 2.A.23) family.</text>
</comment>
<sequence>MKKIYDLWVRVSLIKKIGIGVVIGVMLGILAPDLTGFSILGKLFVGGLKAIAPLLVFALVSQAISHQKKGRQTNMTLIIFLYLFGTFASALVAVLTAYLFPLTLVLNTPVNTELSPPQGVAEVFQSLLLKLVDNPINALATANYIGVLSWAIIFGLALKAASQETKHLIKTAAEVTSQIVVWIINLAPIGIMSLVFTTISENGVGILSDYAFLILVLVGTMVFVALVVNPLIAVLITRQNPYPLVLRCLRESGLTAFFTRSSAANIPVNMQLCQKIGLSKDTYSVSIPLGATINMGGAAITINVLTLAAVHTFGIPIDFLTALLLSVVAAVSACGASGVAGGSLLLIPVACSLFGISNDLAMQVVGVGFIVGVIQDSCETALNSSTDVLFTAIAENAFWKRKKA</sequence>
<gene>
    <name evidence="1" type="primary">sstT</name>
    <name type="ordered locus">spyM18_0318</name>
</gene>
<protein>
    <recommendedName>
        <fullName evidence="1">Serine/threonine transporter SstT</fullName>
    </recommendedName>
    <alternativeName>
        <fullName evidence="1">Na(+)/serine-threonine symporter</fullName>
    </alternativeName>
</protein>
<keyword id="KW-0029">Amino-acid transport</keyword>
<keyword id="KW-1003">Cell membrane</keyword>
<keyword id="KW-0472">Membrane</keyword>
<keyword id="KW-0769">Symport</keyword>
<keyword id="KW-0812">Transmembrane</keyword>
<keyword id="KW-1133">Transmembrane helix</keyword>
<keyword id="KW-0813">Transport</keyword>
<evidence type="ECO:0000255" key="1">
    <source>
        <dbReference type="HAMAP-Rule" id="MF_01582"/>
    </source>
</evidence>
<dbReference type="EMBL" id="AE009949">
    <property type="protein sequence ID" value="AAL97076.1"/>
    <property type="molecule type" value="Genomic_DNA"/>
</dbReference>
<dbReference type="RefSeq" id="WP_002985964.1">
    <property type="nucleotide sequence ID" value="NC_003485.1"/>
</dbReference>
<dbReference type="SMR" id="Q8P2K3"/>
<dbReference type="KEGG" id="spm:spyM18_0318"/>
<dbReference type="HOGENOM" id="CLU_044581_0_0_9"/>
<dbReference type="GO" id="GO:0005886">
    <property type="term" value="C:plasma membrane"/>
    <property type="evidence" value="ECO:0007669"/>
    <property type="project" value="UniProtKB-SubCell"/>
</dbReference>
<dbReference type="GO" id="GO:0005295">
    <property type="term" value="F:neutral L-amino acid:sodium symporter activity"/>
    <property type="evidence" value="ECO:0007669"/>
    <property type="project" value="TreeGrafter"/>
</dbReference>
<dbReference type="GO" id="GO:0032329">
    <property type="term" value="P:serine transport"/>
    <property type="evidence" value="ECO:0007669"/>
    <property type="project" value="InterPro"/>
</dbReference>
<dbReference type="GO" id="GO:0015826">
    <property type="term" value="P:threonine transport"/>
    <property type="evidence" value="ECO:0007669"/>
    <property type="project" value="InterPro"/>
</dbReference>
<dbReference type="FunFam" id="1.10.3860.10:FF:000003">
    <property type="entry name" value="Serine/threonine transporter sstT"/>
    <property type="match status" value="1"/>
</dbReference>
<dbReference type="Gene3D" id="1.10.3860.10">
    <property type="entry name" value="Sodium:dicarboxylate symporter"/>
    <property type="match status" value="1"/>
</dbReference>
<dbReference type="HAMAP" id="MF_01582">
    <property type="entry name" value="Ser_Thr_transp_SstT"/>
    <property type="match status" value="1"/>
</dbReference>
<dbReference type="InterPro" id="IPR001991">
    <property type="entry name" value="Na-dicarboxylate_symporter"/>
</dbReference>
<dbReference type="InterPro" id="IPR036458">
    <property type="entry name" value="Na:dicarbo_symporter_sf"/>
</dbReference>
<dbReference type="InterPro" id="IPR023025">
    <property type="entry name" value="Ser_Thr_transp_SstT"/>
</dbReference>
<dbReference type="NCBIfam" id="NF010151">
    <property type="entry name" value="PRK13628.1"/>
    <property type="match status" value="1"/>
</dbReference>
<dbReference type="PANTHER" id="PTHR42865">
    <property type="entry name" value="PROTON/GLUTAMATE-ASPARTATE SYMPORTER"/>
    <property type="match status" value="1"/>
</dbReference>
<dbReference type="PANTHER" id="PTHR42865:SF8">
    <property type="entry name" value="SERINE_THREONINE TRANSPORTER SSTT"/>
    <property type="match status" value="1"/>
</dbReference>
<dbReference type="Pfam" id="PF00375">
    <property type="entry name" value="SDF"/>
    <property type="match status" value="1"/>
</dbReference>
<dbReference type="PRINTS" id="PR00173">
    <property type="entry name" value="EDTRNSPORT"/>
</dbReference>
<dbReference type="SUPFAM" id="SSF118215">
    <property type="entry name" value="Proton glutamate symport protein"/>
    <property type="match status" value="1"/>
</dbReference>
<reference key="1">
    <citation type="journal article" date="2002" name="Proc. Natl. Acad. Sci. U.S.A.">
        <title>Genome sequence and comparative microarray analysis of serotype M18 group A Streptococcus strains associated with acute rheumatic fever outbreaks.</title>
        <authorList>
            <person name="Smoot J.C."/>
            <person name="Barbian K.D."/>
            <person name="Van Gompel J.J."/>
            <person name="Smoot L.M."/>
            <person name="Chaussee M.S."/>
            <person name="Sylva G.L."/>
            <person name="Sturdevant D.E."/>
            <person name="Ricklefs S.M."/>
            <person name="Porcella S.F."/>
            <person name="Parkins L.D."/>
            <person name="Beres S.B."/>
            <person name="Campbell D.S."/>
            <person name="Smith T.M."/>
            <person name="Zhang Q."/>
            <person name="Kapur V."/>
            <person name="Daly J.A."/>
            <person name="Veasy L.G."/>
            <person name="Musser J.M."/>
        </authorList>
    </citation>
    <scope>NUCLEOTIDE SEQUENCE [LARGE SCALE GENOMIC DNA]</scope>
    <source>
        <strain>MGAS8232</strain>
    </source>
</reference>
<proteinExistence type="inferred from homology"/>
<accession>Q8P2K3</accession>
<organism>
    <name type="scientific">Streptococcus pyogenes serotype M18 (strain MGAS8232)</name>
    <dbReference type="NCBI Taxonomy" id="186103"/>
    <lineage>
        <taxon>Bacteria</taxon>
        <taxon>Bacillati</taxon>
        <taxon>Bacillota</taxon>
        <taxon>Bacilli</taxon>
        <taxon>Lactobacillales</taxon>
        <taxon>Streptococcaceae</taxon>
        <taxon>Streptococcus</taxon>
    </lineage>
</organism>
<name>SSTT_STRP8</name>